<organism>
    <name type="scientific">Bovine coronavirus (strain LY-138)</name>
    <name type="common">BCoV</name>
    <name type="synonym">BCV</name>
    <dbReference type="NCBI Taxonomy" id="11131"/>
    <lineage>
        <taxon>Viruses</taxon>
        <taxon>Riboviria</taxon>
        <taxon>Orthornavirae</taxon>
        <taxon>Pisuviricota</taxon>
        <taxon>Pisoniviricetes</taxon>
        <taxon>Nidovirales</taxon>
        <taxon>Cornidovirineae</taxon>
        <taxon>Coronaviridae</taxon>
        <taxon>Orthocoronavirinae</taxon>
        <taxon>Betacoronavirus</taxon>
        <taxon>Embecovirus</taxon>
        <taxon>Betacoronavirus 1</taxon>
    </lineage>
</organism>
<sequence>MFLLPRFVLVSCIIGSLGFDNPPTNVVSHLNGDWFLFGDSRSDCNHVVNTNPRNYSYMDLNPALCDSGKISSKAGNSIFRSFHFTDFYNYTGEGQQIIFYEGVNFTPYHAFKCTTSGSNDIWMQNKGLFYTQVYKNMAVYRSLTFVNVPYVYNGSAQSTALCKSGSLVLNNPAYIAREANFGDYYYKVEADFYLSGCDEYIVPLCIFNGKFLSNTKYYDDSQYYFNKDTGVIYGLNSTETITTGFDFNCHYLVLPSGNYLAISNELLLTVPTKAICLNKRKDFTPVQVVDSRWNNARQSDNMTAVACQPPYCYFRNSTTNYVGVYDINHGDAGFTSILSGLLYDSPCFSQQGVFRYDNVSSVWPLYPYGRCPTAADINNPDVPICVYDPLPLILLGILLGVAVIIIVVLLLYFMVDNGTRLHDA</sequence>
<proteinExistence type="inferred from homology"/>
<comment type="function">
    <text evidence="1">Structural protein that makes short spikes at the surface of the virus. Contains receptor binding and receptor-destroying activities. Mediates de-O-acetylation of N-acetyl-4-O-acetylneuraminic acid, which is probably the receptor determinant recognized by the virus on the surface of erythrocytes and susceptible cells. This receptor-destroying activity is important for virus release as it probably helps preventing self-aggregation and ensures the efficient spread of the progeny virus from cell to cell. May serve as a secondary viral attachment protein for initiating infection, the spike protein being the major one. May become a target for both the humoral and the cellular branches of the immune system.</text>
</comment>
<comment type="catalytic activity">
    <reaction evidence="1">
        <text>N-acetyl-9-O-acetylneuraminate + H2O = N-acetylneuraminate + acetate + H(+)</text>
        <dbReference type="Rhea" id="RHEA:22600"/>
        <dbReference type="ChEBI" id="CHEBI:15377"/>
        <dbReference type="ChEBI" id="CHEBI:15378"/>
        <dbReference type="ChEBI" id="CHEBI:28999"/>
        <dbReference type="ChEBI" id="CHEBI:30089"/>
        <dbReference type="ChEBI" id="CHEBI:35418"/>
        <dbReference type="EC" id="3.1.1.53"/>
    </reaction>
</comment>
<comment type="catalytic activity">
    <reaction evidence="1">
        <text>N-acetyl-4-O-acetylneuraminate + H2O = N-acetylneuraminate + acetate + H(+)</text>
        <dbReference type="Rhea" id="RHEA:25564"/>
        <dbReference type="ChEBI" id="CHEBI:15377"/>
        <dbReference type="ChEBI" id="CHEBI:15378"/>
        <dbReference type="ChEBI" id="CHEBI:29006"/>
        <dbReference type="ChEBI" id="CHEBI:30089"/>
        <dbReference type="ChEBI" id="CHEBI:35418"/>
        <dbReference type="EC" id="3.1.1.53"/>
    </reaction>
</comment>
<comment type="subunit">
    <text evidence="1">Homodimer; disulfide-linked. Forms a complex with the M protein in the pre-Golgi. Associates then with S-M complex to form a ternary complex S-M-HE.</text>
</comment>
<comment type="subcellular location">
    <subcellularLocation>
        <location evidence="1">Virion membrane</location>
        <topology evidence="1">Single-pass type I membrane protein</topology>
    </subcellularLocation>
    <subcellularLocation>
        <location evidence="1">Host cell membrane</location>
        <topology evidence="1">Single-pass type I membrane protein</topology>
    </subcellularLocation>
    <text evidence="1">In infected cells becomes incorporated into the envelope of virions during virus assembly at the endoplasmic reticulum and cis Golgi. However, some may escape incorporation into virions and subsequently migrate to the cell surface.</text>
</comment>
<comment type="PTM">
    <text evidence="1">N-glycosylated in the host RER.</text>
</comment>
<comment type="similarity">
    <text evidence="1">Belongs to the influenza type C/coronaviruses hemagglutinin-esterase family.</text>
</comment>
<feature type="signal peptide" evidence="1">
    <location>
        <begin position="1"/>
        <end position="16"/>
    </location>
</feature>
<feature type="chain" id="PRO_0000037140" description="Hemagglutinin-esterase" evidence="1">
    <location>
        <begin position="17"/>
        <end position="424"/>
    </location>
</feature>
<feature type="topological domain" description="Virion surface" evidence="1">
    <location>
        <begin position="17"/>
        <end position="392"/>
    </location>
</feature>
<feature type="transmembrane region" description="Helical" evidence="1">
    <location>
        <begin position="393"/>
        <end position="413"/>
    </location>
</feature>
<feature type="topological domain" description="Intravirion" evidence="1">
    <location>
        <begin position="414"/>
        <end position="424"/>
    </location>
</feature>
<feature type="region of interest" description="Esterase domain 1" evidence="1">
    <location>
        <begin position="7"/>
        <end position="127"/>
    </location>
</feature>
<feature type="region of interest" description="Receptor binding" evidence="1">
    <location>
        <begin position="128"/>
        <end position="266"/>
    </location>
</feature>
<feature type="region of interest" description="Esterase domain 2" evidence="1">
    <location>
        <begin position="267"/>
        <end position="379"/>
    </location>
</feature>
<feature type="active site" description="Nucleophile" evidence="1">
    <location>
        <position position="40"/>
    </location>
</feature>
<feature type="active site" description="Charge relay system" evidence="1">
    <location>
        <position position="326"/>
    </location>
</feature>
<feature type="active site" description="Charge relay system" evidence="1">
    <location>
        <position position="329"/>
    </location>
</feature>
<feature type="glycosylation site" description="N-linked (GlcNAc...) asparagine; by host" evidence="1">
    <location>
        <position position="54"/>
    </location>
</feature>
<feature type="glycosylation site" description="N-linked (GlcNAc...) asparagine; by host" evidence="1">
    <location>
        <position position="89"/>
    </location>
</feature>
<feature type="glycosylation site" description="N-linked (GlcNAc...) asparagine; by host" evidence="1">
    <location>
        <position position="153"/>
    </location>
</feature>
<feature type="glycosylation site" description="N-linked (GlcNAc...) asparagine; by host" evidence="1">
    <location>
        <position position="236"/>
    </location>
</feature>
<feature type="glycosylation site" description="N-linked (GlcNAc...) asparagine; by host" evidence="1">
    <location>
        <position position="301"/>
    </location>
</feature>
<feature type="glycosylation site" description="N-linked (GlcNAc...) asparagine; by host" evidence="1">
    <location>
        <position position="316"/>
    </location>
</feature>
<feature type="glycosylation site" description="N-linked (GlcNAc...) asparagine; by host" evidence="1">
    <location>
        <position position="358"/>
    </location>
</feature>
<feature type="glycosylation site" description="N-linked (GlcNAc...) asparagine; by host" evidence="1">
    <location>
        <position position="417"/>
    </location>
</feature>
<feature type="disulfide bond" evidence="1">
    <location>
        <begin position="44"/>
        <end position="65"/>
    </location>
</feature>
<feature type="disulfide bond" evidence="1">
    <location>
        <begin position="113"/>
        <end position="162"/>
    </location>
</feature>
<feature type="disulfide bond" evidence="1">
    <location>
        <begin position="197"/>
        <end position="276"/>
    </location>
</feature>
<feature type="disulfide bond" evidence="1">
    <location>
        <begin position="205"/>
        <end position="249"/>
    </location>
</feature>
<feature type="disulfide bond" evidence="1">
    <location>
        <begin position="307"/>
        <end position="312"/>
    </location>
</feature>
<feature type="disulfide bond" evidence="1">
    <location>
        <begin position="347"/>
        <end position="371"/>
    </location>
</feature>
<protein>
    <recommendedName>
        <fullName evidence="1">Hemagglutinin-esterase</fullName>
        <shortName evidence="1">HE protein</shortName>
        <ecNumber evidence="1">3.1.1.53</ecNumber>
    </recommendedName>
    <alternativeName>
        <fullName evidence="1">E3 glycoprotein</fullName>
    </alternativeName>
</protein>
<name>HEMA_CVBLY</name>
<dbReference type="EC" id="3.1.1.53" evidence="1"/>
<dbReference type="EMBL" id="M84486">
    <property type="status" value="NOT_ANNOTATED_CDS"/>
    <property type="molecule type" value="Genomic_RNA"/>
</dbReference>
<dbReference type="EMBL" id="AF058942">
    <property type="protein sequence ID" value="AAF25498.1"/>
    <property type="molecule type" value="Genomic_RNA"/>
</dbReference>
<dbReference type="PIR" id="B41702">
    <property type="entry name" value="HMIHLY"/>
</dbReference>
<dbReference type="SMR" id="P31613"/>
<dbReference type="GlyCosmos" id="P31613">
    <property type="glycosylation" value="8 sites, No reported glycans"/>
</dbReference>
<dbReference type="GO" id="GO:0020002">
    <property type="term" value="C:host cell plasma membrane"/>
    <property type="evidence" value="ECO:0007669"/>
    <property type="project" value="UniProtKB-SubCell"/>
</dbReference>
<dbReference type="GO" id="GO:0016020">
    <property type="term" value="C:membrane"/>
    <property type="evidence" value="ECO:0007669"/>
    <property type="project" value="UniProtKB-UniRule"/>
</dbReference>
<dbReference type="GO" id="GO:0019031">
    <property type="term" value="C:viral envelope"/>
    <property type="evidence" value="ECO:0007669"/>
    <property type="project" value="UniProtKB-UniRule"/>
</dbReference>
<dbReference type="GO" id="GO:0055036">
    <property type="term" value="C:virion membrane"/>
    <property type="evidence" value="ECO:0007669"/>
    <property type="project" value="UniProtKB-SubCell"/>
</dbReference>
<dbReference type="GO" id="GO:0046789">
    <property type="term" value="F:host cell surface receptor binding"/>
    <property type="evidence" value="ECO:0007669"/>
    <property type="project" value="UniProtKB-UniRule"/>
</dbReference>
<dbReference type="GO" id="GO:0106331">
    <property type="term" value="F:sialate 4-O-acetylesterase activity"/>
    <property type="evidence" value="ECO:0007669"/>
    <property type="project" value="RHEA"/>
</dbReference>
<dbReference type="GO" id="GO:0106330">
    <property type="term" value="F:sialate 9-O-acetylesterase activity"/>
    <property type="evidence" value="ECO:0007669"/>
    <property type="project" value="RHEA"/>
</dbReference>
<dbReference type="GO" id="GO:0001681">
    <property type="term" value="F:sialate O-acetylesterase activity"/>
    <property type="evidence" value="ECO:0000250"/>
    <property type="project" value="UniProtKB"/>
</dbReference>
<dbReference type="GO" id="GO:0019064">
    <property type="term" value="P:fusion of virus membrane with host plasma membrane"/>
    <property type="evidence" value="ECO:0007669"/>
    <property type="project" value="UniProtKB-UniRule"/>
</dbReference>
<dbReference type="HAMAP" id="MF_04207">
    <property type="entry name" value="BETA_CORONA_HE"/>
    <property type="match status" value="1"/>
</dbReference>
<dbReference type="InterPro" id="IPR008980">
    <property type="entry name" value="Capsid_hemagglutn"/>
</dbReference>
<dbReference type="InterPro" id="IPR042545">
    <property type="entry name" value="HEMA"/>
</dbReference>
<dbReference type="InterPro" id="IPR007142">
    <property type="entry name" value="Hemagglutn-estrase_core"/>
</dbReference>
<dbReference type="InterPro" id="IPR003860">
    <property type="entry name" value="Hemagglutn-estrase_hemagglutn"/>
</dbReference>
<dbReference type="Pfam" id="PF03996">
    <property type="entry name" value="Hema_esterase"/>
    <property type="match status" value="1"/>
</dbReference>
<dbReference type="Pfam" id="PF02710">
    <property type="entry name" value="Hema_HEFG"/>
    <property type="match status" value="1"/>
</dbReference>
<dbReference type="SUPFAM" id="SSF52266">
    <property type="entry name" value="SGNH hydrolase"/>
    <property type="match status" value="1"/>
</dbReference>
<dbReference type="SUPFAM" id="SSF49818">
    <property type="entry name" value="Viral protein domain"/>
    <property type="match status" value="1"/>
</dbReference>
<gene>
    <name evidence="1" type="primary">HE</name>
    <name type="ORF">2b</name>
</gene>
<organismHost>
    <name type="scientific">Bos taurus</name>
    <name type="common">Bovine</name>
    <dbReference type="NCBI Taxonomy" id="9913"/>
</organismHost>
<reference key="1">
    <citation type="journal article" date="1991" name="Virology">
        <title>The hemagglutinin/esterase glycoprotein of bovine coronaviruses: sequence and functional comparisons between virulent and avirulent strains.</title>
        <authorList>
            <person name="Zhang X.M."/>
            <person name="Kousoulas K.G."/>
            <person name="Storz J."/>
        </authorList>
    </citation>
    <scope>NUCLEOTIDE SEQUENCE [GENOMIC RNA]</scope>
</reference>
<reference key="2">
    <citation type="journal article" date="1998" name="Virus Genes">
        <title>Nucleotide and predicted amino acid sequences of all genes encoded by the 3' genomic portion (9.5 kb) of respiratory bovine coronaviruses and comparisons among respiratory and enteric coronaviruses.</title>
        <authorList>
            <person name="Chouljenko V.N."/>
            <person name="Kousoulas K.G."/>
            <person name="Lin X.Q."/>
            <person name="Storz J."/>
        </authorList>
    </citation>
    <scope>NUCLEOTIDE SEQUENCE [GENOMIC RNA]</scope>
</reference>
<keyword id="KW-1015">Disulfide bond</keyword>
<keyword id="KW-0325">Glycoprotein</keyword>
<keyword id="KW-0348">Hemagglutinin</keyword>
<keyword id="KW-1032">Host cell membrane</keyword>
<keyword id="KW-1043">Host membrane</keyword>
<keyword id="KW-0378">Hydrolase</keyword>
<keyword id="KW-0472">Membrane</keyword>
<keyword id="KW-0732">Signal</keyword>
<keyword id="KW-0812">Transmembrane</keyword>
<keyword id="KW-1133">Transmembrane helix</keyword>
<keyword id="KW-0261">Viral envelope protein</keyword>
<keyword id="KW-0946">Virion</keyword>
<evidence type="ECO:0000255" key="1">
    <source>
        <dbReference type="HAMAP-Rule" id="MF_04207"/>
    </source>
</evidence>
<accession>P31613</accession>